<dbReference type="EC" id="1.-.-.-"/>
<dbReference type="EMBL" id="AE005672">
    <property type="protein sequence ID" value="AAK75765.1"/>
    <property type="molecule type" value="Genomic_DNA"/>
</dbReference>
<dbReference type="EMBL" id="U43526">
    <property type="protein sequence ID" value="AAC44397.1"/>
    <property type="molecule type" value="Genomic_DNA"/>
</dbReference>
<dbReference type="PIR" id="D95196">
    <property type="entry name" value="D95196"/>
</dbReference>
<dbReference type="RefSeq" id="WP_000241734.1">
    <property type="nucleotide sequence ID" value="NZ_CP155539.1"/>
</dbReference>
<dbReference type="SMR" id="Q54728"/>
<dbReference type="PaxDb" id="170187-SP_1686"/>
<dbReference type="EnsemblBacteria" id="AAK75765">
    <property type="protein sequence ID" value="AAK75765"/>
    <property type="gene ID" value="SP_1686"/>
</dbReference>
<dbReference type="KEGG" id="spn:SP_1686"/>
<dbReference type="eggNOG" id="COG0673">
    <property type="taxonomic scope" value="Bacteria"/>
</dbReference>
<dbReference type="PhylomeDB" id="Q54728"/>
<dbReference type="BioCyc" id="SPNE170187:G1FZB-1707-MONOMER"/>
<dbReference type="Proteomes" id="UP000000585">
    <property type="component" value="Chromosome"/>
</dbReference>
<dbReference type="GO" id="GO:0000166">
    <property type="term" value="F:nucleotide binding"/>
    <property type="evidence" value="ECO:0007669"/>
    <property type="project" value="InterPro"/>
</dbReference>
<dbReference type="GO" id="GO:0016491">
    <property type="term" value="F:oxidoreductase activity"/>
    <property type="evidence" value="ECO:0007669"/>
    <property type="project" value="UniProtKB-KW"/>
</dbReference>
<dbReference type="Gene3D" id="3.30.360.10">
    <property type="entry name" value="Dihydrodipicolinate Reductase, domain 2"/>
    <property type="match status" value="1"/>
</dbReference>
<dbReference type="Gene3D" id="3.40.50.720">
    <property type="entry name" value="NAD(P)-binding Rossmann-like Domain"/>
    <property type="match status" value="1"/>
</dbReference>
<dbReference type="InterPro" id="IPR004104">
    <property type="entry name" value="Gfo/Idh/MocA-like_OxRdtase_C"/>
</dbReference>
<dbReference type="InterPro" id="IPR000683">
    <property type="entry name" value="Gfo/Idh/MocA-like_OxRdtase_N"/>
</dbReference>
<dbReference type="InterPro" id="IPR051450">
    <property type="entry name" value="Gfo/Idh/MocA_Oxidoreductases"/>
</dbReference>
<dbReference type="InterPro" id="IPR036291">
    <property type="entry name" value="NAD(P)-bd_dom_sf"/>
</dbReference>
<dbReference type="PANTHER" id="PTHR43377">
    <property type="entry name" value="BILIVERDIN REDUCTASE A"/>
    <property type="match status" value="1"/>
</dbReference>
<dbReference type="PANTHER" id="PTHR43377:SF1">
    <property type="entry name" value="BILIVERDIN REDUCTASE A"/>
    <property type="match status" value="1"/>
</dbReference>
<dbReference type="Pfam" id="PF01408">
    <property type="entry name" value="GFO_IDH_MocA"/>
    <property type="match status" value="1"/>
</dbReference>
<dbReference type="Pfam" id="PF02894">
    <property type="entry name" value="GFO_IDH_MocA_C"/>
    <property type="match status" value="1"/>
</dbReference>
<dbReference type="SUPFAM" id="SSF55347">
    <property type="entry name" value="Glyceraldehyde-3-phosphate dehydrogenase-like, C-terminal domain"/>
    <property type="match status" value="1"/>
</dbReference>
<dbReference type="SUPFAM" id="SSF51735">
    <property type="entry name" value="NAD(P)-binding Rossmann-fold domains"/>
    <property type="match status" value="1"/>
</dbReference>
<protein>
    <recommendedName>
        <fullName>Uncharacterized oxidoreductase SP_1686</fullName>
        <ecNumber>1.-.-.-</ecNumber>
    </recommendedName>
</protein>
<keyword id="KW-0560">Oxidoreductase</keyword>
<keyword id="KW-1185">Reference proteome</keyword>
<accession>Q54728</accession>
<feature type="chain" id="PRO_0000091782" description="Uncharacterized oxidoreductase SP_1686">
    <location>
        <begin position="1"/>
        <end position="367"/>
    </location>
</feature>
<feature type="sequence conflict" description="In Ref. 2; AAC44397." evidence="1" ref="2">
    <original>T</original>
    <variation>A</variation>
    <location>
        <position position="9"/>
    </location>
</feature>
<feature type="sequence conflict" description="In Ref. 2; AAC44397." evidence="1" ref="2">
    <original>P</original>
    <variation>L</variation>
    <location>
        <position position="156"/>
    </location>
</feature>
<name>Y1686_STRPN</name>
<comment type="similarity">
    <text evidence="1">Belongs to the Gfo/Idh/MocA family.</text>
</comment>
<gene>
    <name type="ordered locus">SP_1686</name>
</gene>
<organism>
    <name type="scientific">Streptococcus pneumoniae serotype 4 (strain ATCC BAA-334 / TIGR4)</name>
    <dbReference type="NCBI Taxonomy" id="170187"/>
    <lineage>
        <taxon>Bacteria</taxon>
        <taxon>Bacillati</taxon>
        <taxon>Bacillota</taxon>
        <taxon>Bacilli</taxon>
        <taxon>Lactobacillales</taxon>
        <taxon>Streptococcaceae</taxon>
        <taxon>Streptococcus</taxon>
    </lineage>
</organism>
<evidence type="ECO:0000305" key="1"/>
<sequence length="367" mass="41095">MVKYGVVGTGYFGAELARYMQKNDGAEITLLYDPDNAEAIAEELGAKVASSLDELVSSDEVDCVIVATPNNLHKEPVIKAAQHGKNVFCEKPIALSYQDCREMVDACKENNVTFMAGHIMNFFNGVHHAKELINQGVIGDVLYCHTARNGWEEQQPSVSWKKIREKSGGHLYHHIHELDCVQFLMGGMPETVTMTGGNVAHEGEHFGDEDDMIFVNMEFSNKRFALLEWGSAYRWGEHYVLIQGSKGAIRLDLFNCKGTLKLDGQESYFLIHESQEEDDDRTRIYHSTEMDGAIAYGKPGKRTPLWLSSVIDKEMRYLHEIMEGAPVSEEFAKLLTGEAALEAIATADACTQSMFEDRKVKLSEIVK</sequence>
<proteinExistence type="inferred from homology"/>
<reference key="1">
    <citation type="journal article" date="2001" name="Science">
        <title>Complete genome sequence of a virulent isolate of Streptococcus pneumoniae.</title>
        <authorList>
            <person name="Tettelin H."/>
            <person name="Nelson K.E."/>
            <person name="Paulsen I.T."/>
            <person name="Eisen J.A."/>
            <person name="Read T.D."/>
            <person name="Peterson S.N."/>
            <person name="Heidelberg J.F."/>
            <person name="DeBoy R.T."/>
            <person name="Haft D.H."/>
            <person name="Dodson R.J."/>
            <person name="Durkin A.S."/>
            <person name="Gwinn M.L."/>
            <person name="Kolonay J.F."/>
            <person name="Nelson W.C."/>
            <person name="Peterson J.D."/>
            <person name="Umayam L.A."/>
            <person name="White O."/>
            <person name="Salzberg S.L."/>
            <person name="Lewis M.R."/>
            <person name="Radune D."/>
            <person name="Holtzapple E.K."/>
            <person name="Khouri H.M."/>
            <person name="Wolf A.M."/>
            <person name="Utterback T.R."/>
            <person name="Hansen C.L."/>
            <person name="McDonald L.A."/>
            <person name="Feldblyum T.V."/>
            <person name="Angiuoli S.V."/>
            <person name="Dickinson T."/>
            <person name="Hickey E.K."/>
            <person name="Holt I.E."/>
            <person name="Loftus B.J."/>
            <person name="Yang F."/>
            <person name="Smith H.O."/>
            <person name="Venter J.C."/>
            <person name="Dougherty B.A."/>
            <person name="Morrison D.A."/>
            <person name="Hollingshead S.K."/>
            <person name="Fraser C.M."/>
        </authorList>
    </citation>
    <scope>NUCLEOTIDE SEQUENCE [LARGE SCALE GENOMIC DNA]</scope>
    <source>
        <strain>ATCC BAA-334 / TIGR4</strain>
    </source>
</reference>
<reference key="2">
    <citation type="journal article" date="1996" name="J. Bacteriol.">
        <title>Cloning and characterization of nanB, a second Streptococcus pneumoniae neuraminidase gene, and purification of the NanB enzyme from recombinant Escherichia coli.</title>
        <authorList>
            <person name="Berry A.M."/>
            <person name="Lock R.A."/>
            <person name="Paton J.C."/>
        </authorList>
    </citation>
    <scope>NUCLEOTIDE SEQUENCE [GENOMIC DNA] OF 1-347</scope>
    <source>
        <strain>Serotype 6</strain>
    </source>
</reference>